<sequence length="217" mass="24213">MAHSIWHEKIKSFLPEHYYGRINHFLDEAYASGLVYPPRENVFKALQVTPLEETKVLILGQDPYHGPKQAQGLSFSVPEEISAPPSLINILKELADDIGPRDHHDLSTWASQGVLLLNACLTVPAGQANGHAGLIWEPFTDAVIKVLNEKDSPVVFILWGAYARKKKAFITNPKHHIIESPHPSPLSSYRGFFGSKPFSRTNAILEKEGMTGVDWLK</sequence>
<accession>Q9A072</accession>
<accession>Q48Z92</accession>
<protein>
    <recommendedName>
        <fullName evidence="1">Uracil-DNA glycosylase</fullName>
        <shortName evidence="1">UDG</shortName>
        <ecNumber evidence="1">3.2.2.27</ecNumber>
    </recommendedName>
</protein>
<gene>
    <name evidence="1" type="primary">ung</name>
    <name type="ordered locus">SPy_0905</name>
    <name type="ordered locus">M5005_Spy0708</name>
</gene>
<keyword id="KW-0963">Cytoplasm</keyword>
<keyword id="KW-0227">DNA damage</keyword>
<keyword id="KW-0234">DNA repair</keyword>
<keyword id="KW-0378">Hydrolase</keyword>
<keyword id="KW-1185">Reference proteome</keyword>
<evidence type="ECO:0000255" key="1">
    <source>
        <dbReference type="HAMAP-Rule" id="MF_00148"/>
    </source>
</evidence>
<organism>
    <name type="scientific">Streptococcus pyogenes serotype M1</name>
    <dbReference type="NCBI Taxonomy" id="301447"/>
    <lineage>
        <taxon>Bacteria</taxon>
        <taxon>Bacillati</taxon>
        <taxon>Bacillota</taxon>
        <taxon>Bacilli</taxon>
        <taxon>Lactobacillales</taxon>
        <taxon>Streptococcaceae</taxon>
        <taxon>Streptococcus</taxon>
    </lineage>
</organism>
<name>UNG_STRP1</name>
<comment type="function">
    <text evidence="1">Excises uracil residues from the DNA which can arise as a result of misincorporation of dUMP residues by DNA polymerase or due to deamination of cytosine.</text>
</comment>
<comment type="catalytic activity">
    <reaction evidence="1">
        <text>Hydrolyzes single-stranded DNA or mismatched double-stranded DNA and polynucleotides, releasing free uracil.</text>
        <dbReference type="EC" id="3.2.2.27"/>
    </reaction>
</comment>
<comment type="subcellular location">
    <subcellularLocation>
        <location evidence="1">Cytoplasm</location>
    </subcellularLocation>
</comment>
<comment type="similarity">
    <text evidence="1">Belongs to the uracil-DNA glycosylase (UDG) superfamily. UNG family.</text>
</comment>
<dbReference type="EC" id="3.2.2.27" evidence="1"/>
<dbReference type="EMBL" id="AE004092">
    <property type="protein sequence ID" value="AAK33822.1"/>
    <property type="molecule type" value="Genomic_DNA"/>
</dbReference>
<dbReference type="EMBL" id="CP000017">
    <property type="protein sequence ID" value="AAZ51326.1"/>
    <property type="molecule type" value="Genomic_DNA"/>
</dbReference>
<dbReference type="RefSeq" id="NP_269101.1">
    <property type="nucleotide sequence ID" value="NC_002737.2"/>
</dbReference>
<dbReference type="SMR" id="Q9A072"/>
<dbReference type="PaxDb" id="1314-HKU360_00718"/>
<dbReference type="KEGG" id="spy:SPy_0905"/>
<dbReference type="KEGG" id="spz:M5005_Spy0708"/>
<dbReference type="PATRIC" id="fig|160490.10.peg.778"/>
<dbReference type="HOGENOM" id="CLU_032162_3_1_9"/>
<dbReference type="OMA" id="PDNGYLM"/>
<dbReference type="Proteomes" id="UP000000750">
    <property type="component" value="Chromosome"/>
</dbReference>
<dbReference type="GO" id="GO:0005737">
    <property type="term" value="C:cytoplasm"/>
    <property type="evidence" value="ECO:0007669"/>
    <property type="project" value="UniProtKB-SubCell"/>
</dbReference>
<dbReference type="GO" id="GO:0004844">
    <property type="term" value="F:uracil DNA N-glycosylase activity"/>
    <property type="evidence" value="ECO:0007669"/>
    <property type="project" value="UniProtKB-UniRule"/>
</dbReference>
<dbReference type="GO" id="GO:0097510">
    <property type="term" value="P:base-excision repair, AP site formation via deaminated base removal"/>
    <property type="evidence" value="ECO:0007669"/>
    <property type="project" value="TreeGrafter"/>
</dbReference>
<dbReference type="CDD" id="cd10027">
    <property type="entry name" value="UDG-F1-like"/>
    <property type="match status" value="1"/>
</dbReference>
<dbReference type="FunFam" id="3.40.470.10:FF:000008">
    <property type="entry name" value="Uracil-DNA glycosylase"/>
    <property type="match status" value="1"/>
</dbReference>
<dbReference type="Gene3D" id="3.40.470.10">
    <property type="entry name" value="Uracil-DNA glycosylase-like domain"/>
    <property type="match status" value="1"/>
</dbReference>
<dbReference type="HAMAP" id="MF_00148">
    <property type="entry name" value="UDG"/>
    <property type="match status" value="1"/>
</dbReference>
<dbReference type="InterPro" id="IPR002043">
    <property type="entry name" value="UDG_fam1"/>
</dbReference>
<dbReference type="InterPro" id="IPR018085">
    <property type="entry name" value="Ura-DNA_Glyclase_AS"/>
</dbReference>
<dbReference type="InterPro" id="IPR005122">
    <property type="entry name" value="Uracil-DNA_glycosylase-like"/>
</dbReference>
<dbReference type="InterPro" id="IPR036895">
    <property type="entry name" value="Uracil-DNA_glycosylase-like_sf"/>
</dbReference>
<dbReference type="NCBIfam" id="NF003588">
    <property type="entry name" value="PRK05254.1-1"/>
    <property type="match status" value="1"/>
</dbReference>
<dbReference type="NCBIfam" id="NF003589">
    <property type="entry name" value="PRK05254.1-2"/>
    <property type="match status" value="1"/>
</dbReference>
<dbReference type="NCBIfam" id="NF003592">
    <property type="entry name" value="PRK05254.1-5"/>
    <property type="match status" value="1"/>
</dbReference>
<dbReference type="NCBIfam" id="TIGR00628">
    <property type="entry name" value="ung"/>
    <property type="match status" value="1"/>
</dbReference>
<dbReference type="PANTHER" id="PTHR11264">
    <property type="entry name" value="URACIL-DNA GLYCOSYLASE"/>
    <property type="match status" value="1"/>
</dbReference>
<dbReference type="PANTHER" id="PTHR11264:SF0">
    <property type="entry name" value="URACIL-DNA GLYCOSYLASE"/>
    <property type="match status" value="1"/>
</dbReference>
<dbReference type="Pfam" id="PF03167">
    <property type="entry name" value="UDG"/>
    <property type="match status" value="1"/>
</dbReference>
<dbReference type="SMART" id="SM00986">
    <property type="entry name" value="UDG"/>
    <property type="match status" value="1"/>
</dbReference>
<dbReference type="SMART" id="SM00987">
    <property type="entry name" value="UreE_C"/>
    <property type="match status" value="1"/>
</dbReference>
<dbReference type="SUPFAM" id="SSF52141">
    <property type="entry name" value="Uracil-DNA glycosylase-like"/>
    <property type="match status" value="1"/>
</dbReference>
<dbReference type="PROSITE" id="PS00130">
    <property type="entry name" value="U_DNA_GLYCOSYLASE"/>
    <property type="match status" value="1"/>
</dbReference>
<reference key="1">
    <citation type="journal article" date="2001" name="Proc. Natl. Acad. Sci. U.S.A.">
        <title>Complete genome sequence of an M1 strain of Streptococcus pyogenes.</title>
        <authorList>
            <person name="Ferretti J.J."/>
            <person name="McShan W.M."/>
            <person name="Ajdic D.J."/>
            <person name="Savic D.J."/>
            <person name="Savic G."/>
            <person name="Lyon K."/>
            <person name="Primeaux C."/>
            <person name="Sezate S."/>
            <person name="Suvorov A.N."/>
            <person name="Kenton S."/>
            <person name="Lai H.S."/>
            <person name="Lin S.P."/>
            <person name="Qian Y."/>
            <person name="Jia H.G."/>
            <person name="Najar F.Z."/>
            <person name="Ren Q."/>
            <person name="Zhu H."/>
            <person name="Song L."/>
            <person name="White J."/>
            <person name="Yuan X."/>
            <person name="Clifton S.W."/>
            <person name="Roe B.A."/>
            <person name="McLaughlin R.E."/>
        </authorList>
    </citation>
    <scope>NUCLEOTIDE SEQUENCE [LARGE SCALE GENOMIC DNA]</scope>
    <source>
        <strain>ATCC 700294 / SF370 / Serotype M1</strain>
    </source>
</reference>
<reference key="2">
    <citation type="journal article" date="2005" name="J. Infect. Dis.">
        <title>Evolutionary origin and emergence of a highly successful clone of serotype M1 group A Streptococcus involved multiple horizontal gene transfer events.</title>
        <authorList>
            <person name="Sumby P."/>
            <person name="Porcella S.F."/>
            <person name="Madrigal A.G."/>
            <person name="Barbian K.D."/>
            <person name="Virtaneva K."/>
            <person name="Ricklefs S.M."/>
            <person name="Sturdevant D.E."/>
            <person name="Graham M.R."/>
            <person name="Vuopio-Varkila J."/>
            <person name="Hoe N.P."/>
            <person name="Musser J.M."/>
        </authorList>
    </citation>
    <scope>NUCLEOTIDE SEQUENCE [LARGE SCALE GENOMIC DNA]</scope>
    <source>
        <strain>ATCC BAA-947 / MGAS5005 / Serotype M1</strain>
    </source>
</reference>
<proteinExistence type="inferred from homology"/>
<feature type="chain" id="PRO_0000176154" description="Uracil-DNA glycosylase">
    <location>
        <begin position="1"/>
        <end position="217"/>
    </location>
</feature>
<feature type="active site" description="Proton acceptor" evidence="1">
    <location>
        <position position="62"/>
    </location>
</feature>